<keyword id="KW-1045">Host mitochondrion</keyword>
<keyword id="KW-1048">Host nucleus</keyword>
<keyword id="KW-0945">Host-virus interaction</keyword>
<keyword id="KW-1119">Modulation of host cell apoptosis by virus</keyword>
<keyword id="KW-0597">Phosphoprotein</keyword>
<comment type="function">
    <text evidence="1">Plays an essential role in the inhibition of host apoptosis. Mediates host mitochondria-mediated apoptosis through interaction with the mitochondrial antiviral signaling protein/MAVS and thereby promotes viral persistence in host central nervous system. Within the host nucleus, regulates viral RNA synthesis and polymerase complex assembly.</text>
</comment>
<comment type="subunit">
    <text evidence="1">Interacts with P and N proteins. These interactions presumably promote nuclear targeting of the X protein in infected cells. Interacts with host MAVS; this interaction inhibits MAVS-induced apoptosis.</text>
</comment>
<comment type="subcellular location">
    <subcellularLocation>
        <location>Host nucleus</location>
    </subcellularLocation>
    <subcellularLocation>
        <location evidence="1">Host mitochondrion</location>
    </subcellularLocation>
</comment>
<comment type="PTM">
    <text evidence="1">Phosphorylated.</text>
</comment>
<comment type="miscellaneous">
    <text>The P/X gene has 2 overlapping open reading frames. One encodes the P protein and the other the X protein. The p24, X and p16 proteins are produced by ribosomal leaky scanning.</text>
</comment>
<organism>
    <name type="scientific">Borna disease virus 1</name>
    <name type="common">BoDV-1</name>
    <dbReference type="NCBI Taxonomy" id="1714621"/>
    <lineage>
        <taxon>Viruses</taxon>
        <taxon>Riboviria</taxon>
        <taxon>Orthornavirae</taxon>
        <taxon>Negarnaviricota</taxon>
        <taxon>Haploviricotina</taxon>
        <taxon>Monjiviricetes</taxon>
        <taxon>Mononegavirales</taxon>
        <taxon>Bornaviridae</taxon>
        <taxon>Orthobornavirus</taxon>
        <taxon>Orthobornavirus bornaense</taxon>
    </lineage>
</organism>
<protein>
    <recommendedName>
        <fullName>X protein</fullName>
    </recommendedName>
    <alternativeName>
        <fullName>p10</fullName>
    </alternativeName>
</protein>
<reference key="1">
    <citation type="journal article" date="2002" name="J. Virol.">
        <title>Enhanced neurovirulence of borna disease virus variants associated with nucleotide changes in the glycoprotein and L polymerase genes.</title>
        <authorList>
            <person name="Nishino Y."/>
            <person name="Kobasa D."/>
            <person name="Rubin S.A."/>
            <person name="Pletnikov M.V."/>
            <person name="Carbone K.M."/>
        </authorList>
    </citation>
    <scope>NUCLEOTIDE SEQUENCE [GENOMIC RNA]</scope>
    <source>
        <strain>Isolate CRNP5</strain>
        <strain>Isolate CRP3A</strain>
        <strain>Isolate CRP3B</strain>
    </source>
</reference>
<dbReference type="EMBL" id="AY114161">
    <property type="protein sequence ID" value="AAM68135.1"/>
    <property type="molecule type" value="Genomic_RNA"/>
</dbReference>
<dbReference type="EMBL" id="AY114162">
    <property type="protein sequence ID" value="AAM68141.1"/>
    <property type="molecule type" value="Genomic_RNA"/>
</dbReference>
<dbReference type="EMBL" id="AY114163">
    <property type="protein sequence ID" value="AAM68147.1"/>
    <property type="molecule type" value="Genomic_RNA"/>
</dbReference>
<dbReference type="RefSeq" id="YP_009272535.1">
    <property type="nucleotide sequence ID" value="NC_001607.1"/>
</dbReference>
<dbReference type="OrthoDB" id="26087at10239"/>
<dbReference type="Proteomes" id="UP000116075">
    <property type="component" value="Genome"/>
</dbReference>
<dbReference type="Proteomes" id="UP000117149">
    <property type="component" value="Genome"/>
</dbReference>
<dbReference type="Proteomes" id="UP000158638">
    <property type="component" value="Genome"/>
</dbReference>
<dbReference type="GO" id="GO:0033650">
    <property type="term" value="C:host cell mitochondrion"/>
    <property type="evidence" value="ECO:0007669"/>
    <property type="project" value="UniProtKB-SubCell"/>
</dbReference>
<dbReference type="GO" id="GO:0042025">
    <property type="term" value="C:host cell nucleus"/>
    <property type="evidence" value="ECO:0007669"/>
    <property type="project" value="UniProtKB-SubCell"/>
</dbReference>
<dbReference type="GO" id="GO:0052150">
    <property type="term" value="P:symbiont-mediated perturbation of host apoptosis"/>
    <property type="evidence" value="ECO:0007669"/>
    <property type="project" value="UniProtKB-KW"/>
</dbReference>
<dbReference type="InterPro" id="IPR009485">
    <property type="entry name" value="BDV_P10"/>
</dbReference>
<dbReference type="Pfam" id="PF06515">
    <property type="entry name" value="BDV_P10"/>
    <property type="match status" value="1"/>
</dbReference>
<gene>
    <name type="primary">P/X</name>
</gene>
<sequence length="87" mass="9386">MSSDLRLTLLELVRRLNGNATIESGRLPGGRRRSPDTTTGTTGVTKTTEGPKECIDPTSRPAPEGPQEEPLHDLRPRPANRKGAAVE</sequence>
<accession>P0DOF1</accession>
<accession>Q8JJK0</accession>
<accession>Q912Z9</accession>
<proteinExistence type="inferred from homology"/>
<name>X_BDV1</name>
<evidence type="ECO:0000250" key="1">
    <source>
        <dbReference type="UniProtKB" id="P0DOF0"/>
    </source>
</evidence>
<evidence type="ECO:0000256" key="2">
    <source>
        <dbReference type="SAM" id="MobiDB-lite"/>
    </source>
</evidence>
<feature type="chain" id="PRO_0000439632" description="X protein">
    <location>
        <begin position="1"/>
        <end position="87"/>
    </location>
</feature>
<feature type="region of interest" description="Nuclear export signal" evidence="1">
    <location>
        <begin position="5"/>
        <end position="16"/>
    </location>
</feature>
<feature type="region of interest" description="Disordered" evidence="2">
    <location>
        <begin position="18"/>
        <end position="87"/>
    </location>
</feature>
<feature type="compositionally biased region" description="Low complexity" evidence="2">
    <location>
        <begin position="36"/>
        <end position="48"/>
    </location>
</feature>
<organismHost>
    <name type="scientific">Bos taurus</name>
    <name type="common">Bovine</name>
    <dbReference type="NCBI Taxonomy" id="9913"/>
</organismHost>
<organismHost>
    <name type="scientific">Bradypodidae</name>
    <name type="common">three-fingered sloths</name>
    <dbReference type="NCBI Taxonomy" id="9352"/>
</organismHost>
<organismHost>
    <name type="scientific">Capra hircus</name>
    <name type="common">Goat</name>
    <dbReference type="NCBI Taxonomy" id="9925"/>
</organismHost>
<organismHost>
    <name type="scientific">Cervidae</name>
    <name type="common">Deer</name>
    <dbReference type="NCBI Taxonomy" id="9850"/>
</organismHost>
<organismHost>
    <name type="scientific">Crocidura leucodon</name>
    <name type="common">Bicoloured white-toothed shrew</name>
    <name type="synonym">Celebes shrew</name>
    <dbReference type="NCBI Taxonomy" id="109474"/>
</organismHost>
<organismHost>
    <name type="scientific">Equidae</name>
    <name type="common">horses</name>
    <dbReference type="NCBI Taxonomy" id="9788"/>
</organismHost>
<organismHost>
    <name type="scientific">Felis catus</name>
    <name type="common">Cat</name>
    <name type="synonym">Felis silvestris catus</name>
    <dbReference type="NCBI Taxonomy" id="9685"/>
</organismHost>
<organismHost>
    <name type="scientific">Hexaprotodon liberiensis</name>
    <name type="common">Pygmy hippopotamus</name>
    <name type="synonym">Choeropsis liberiensis</name>
    <dbReference type="NCBI Taxonomy" id="56798"/>
</organismHost>
<organismHost>
    <name type="scientific">Lama glama</name>
    <name type="common">Llama</name>
    <dbReference type="NCBI Taxonomy" id="9844"/>
</organismHost>
<organismHost>
    <name type="scientific">Oryctolagus cuniculus</name>
    <name type="common">Rabbit</name>
    <dbReference type="NCBI Taxonomy" id="9986"/>
</organismHost>
<organismHost>
    <name type="scientific">Ovis aries</name>
    <name type="common">Sheep</name>
    <dbReference type="NCBI Taxonomy" id="9940"/>
</organismHost>
<organismHost>
    <name type="scientific">Struthio camelus</name>
    <name type="common">Common ostrich</name>
    <dbReference type="NCBI Taxonomy" id="8801"/>
</organismHost>
<organismHost>
    <name type="scientific">Varecia variegata</name>
    <name type="common">Black-and-white ruffed lemur</name>
    <name type="synonym">Lemur variegatus</name>
    <dbReference type="NCBI Taxonomy" id="9455"/>
</organismHost>
<organismHost>
    <name type="scientific">Vicugna pacos</name>
    <name type="common">Alpaca</name>
    <name type="synonym">Lama pacos</name>
    <dbReference type="NCBI Taxonomy" id="30538"/>
</organismHost>